<gene>
    <name type="primary">Rpl38</name>
</gene>
<comment type="function">
    <text evidence="2">Component of the large ribosomal subunit (PubMed:36517592). The ribosome is a large ribonucleoprotein complex responsible for the synthesis of proteins in the cell (PubMed:36517592).</text>
</comment>
<comment type="subunit">
    <text evidence="2">Component of the large ribosomal subunit.</text>
</comment>
<comment type="subcellular location">
    <subcellularLocation>
        <location evidence="2">Cytoplasm</location>
    </subcellularLocation>
</comment>
<comment type="similarity">
    <text evidence="3">Belongs to the eukaryotic ribosomal protein eL38 family.</text>
</comment>
<reference key="1">
    <citation type="submission" date="2000-01" db="EMBL/GenBank/DDBJ databases">
        <title>Positional cloning of tail-short gene.</title>
        <authorList>
            <person name="Shimizu K."/>
        </authorList>
    </citation>
    <scope>NUCLEOTIDE SEQUENCE [MRNA]</scope>
</reference>
<reference key="2">
    <citation type="journal article" date="2005" name="Science">
        <title>The transcriptional landscape of the mammalian genome.</title>
        <authorList>
            <person name="Carninci P."/>
            <person name="Kasukawa T."/>
            <person name="Katayama S."/>
            <person name="Gough J."/>
            <person name="Frith M.C."/>
            <person name="Maeda N."/>
            <person name="Oyama R."/>
            <person name="Ravasi T."/>
            <person name="Lenhard B."/>
            <person name="Wells C."/>
            <person name="Kodzius R."/>
            <person name="Shimokawa K."/>
            <person name="Bajic V.B."/>
            <person name="Brenner S.E."/>
            <person name="Batalov S."/>
            <person name="Forrest A.R."/>
            <person name="Zavolan M."/>
            <person name="Davis M.J."/>
            <person name="Wilming L.G."/>
            <person name="Aidinis V."/>
            <person name="Allen J.E."/>
            <person name="Ambesi-Impiombato A."/>
            <person name="Apweiler R."/>
            <person name="Aturaliya R.N."/>
            <person name="Bailey T.L."/>
            <person name="Bansal M."/>
            <person name="Baxter L."/>
            <person name="Beisel K.W."/>
            <person name="Bersano T."/>
            <person name="Bono H."/>
            <person name="Chalk A.M."/>
            <person name="Chiu K.P."/>
            <person name="Choudhary V."/>
            <person name="Christoffels A."/>
            <person name="Clutterbuck D.R."/>
            <person name="Crowe M.L."/>
            <person name="Dalla E."/>
            <person name="Dalrymple B.P."/>
            <person name="de Bono B."/>
            <person name="Della Gatta G."/>
            <person name="di Bernardo D."/>
            <person name="Down T."/>
            <person name="Engstrom P."/>
            <person name="Fagiolini M."/>
            <person name="Faulkner G."/>
            <person name="Fletcher C.F."/>
            <person name="Fukushima T."/>
            <person name="Furuno M."/>
            <person name="Futaki S."/>
            <person name="Gariboldi M."/>
            <person name="Georgii-Hemming P."/>
            <person name="Gingeras T.R."/>
            <person name="Gojobori T."/>
            <person name="Green R.E."/>
            <person name="Gustincich S."/>
            <person name="Harbers M."/>
            <person name="Hayashi Y."/>
            <person name="Hensch T.K."/>
            <person name="Hirokawa N."/>
            <person name="Hill D."/>
            <person name="Huminiecki L."/>
            <person name="Iacono M."/>
            <person name="Ikeo K."/>
            <person name="Iwama A."/>
            <person name="Ishikawa T."/>
            <person name="Jakt M."/>
            <person name="Kanapin A."/>
            <person name="Katoh M."/>
            <person name="Kawasawa Y."/>
            <person name="Kelso J."/>
            <person name="Kitamura H."/>
            <person name="Kitano H."/>
            <person name="Kollias G."/>
            <person name="Krishnan S.P."/>
            <person name="Kruger A."/>
            <person name="Kummerfeld S.K."/>
            <person name="Kurochkin I.V."/>
            <person name="Lareau L.F."/>
            <person name="Lazarevic D."/>
            <person name="Lipovich L."/>
            <person name="Liu J."/>
            <person name="Liuni S."/>
            <person name="McWilliam S."/>
            <person name="Madan Babu M."/>
            <person name="Madera M."/>
            <person name="Marchionni L."/>
            <person name="Matsuda H."/>
            <person name="Matsuzawa S."/>
            <person name="Miki H."/>
            <person name="Mignone F."/>
            <person name="Miyake S."/>
            <person name="Morris K."/>
            <person name="Mottagui-Tabar S."/>
            <person name="Mulder N."/>
            <person name="Nakano N."/>
            <person name="Nakauchi H."/>
            <person name="Ng P."/>
            <person name="Nilsson R."/>
            <person name="Nishiguchi S."/>
            <person name="Nishikawa S."/>
            <person name="Nori F."/>
            <person name="Ohara O."/>
            <person name="Okazaki Y."/>
            <person name="Orlando V."/>
            <person name="Pang K.C."/>
            <person name="Pavan W.J."/>
            <person name="Pavesi G."/>
            <person name="Pesole G."/>
            <person name="Petrovsky N."/>
            <person name="Piazza S."/>
            <person name="Reed J."/>
            <person name="Reid J.F."/>
            <person name="Ring B.Z."/>
            <person name="Ringwald M."/>
            <person name="Rost B."/>
            <person name="Ruan Y."/>
            <person name="Salzberg S.L."/>
            <person name="Sandelin A."/>
            <person name="Schneider C."/>
            <person name="Schoenbach C."/>
            <person name="Sekiguchi K."/>
            <person name="Semple C.A."/>
            <person name="Seno S."/>
            <person name="Sessa L."/>
            <person name="Sheng Y."/>
            <person name="Shibata Y."/>
            <person name="Shimada H."/>
            <person name="Shimada K."/>
            <person name="Silva D."/>
            <person name="Sinclair B."/>
            <person name="Sperling S."/>
            <person name="Stupka E."/>
            <person name="Sugiura K."/>
            <person name="Sultana R."/>
            <person name="Takenaka Y."/>
            <person name="Taki K."/>
            <person name="Tammoja K."/>
            <person name="Tan S.L."/>
            <person name="Tang S."/>
            <person name="Taylor M.S."/>
            <person name="Tegner J."/>
            <person name="Teichmann S.A."/>
            <person name="Ueda H.R."/>
            <person name="van Nimwegen E."/>
            <person name="Verardo R."/>
            <person name="Wei C.L."/>
            <person name="Yagi K."/>
            <person name="Yamanishi H."/>
            <person name="Zabarovsky E."/>
            <person name="Zhu S."/>
            <person name="Zimmer A."/>
            <person name="Hide W."/>
            <person name="Bult C."/>
            <person name="Grimmond S.M."/>
            <person name="Teasdale R.D."/>
            <person name="Liu E.T."/>
            <person name="Brusic V."/>
            <person name="Quackenbush J."/>
            <person name="Wahlestedt C."/>
            <person name="Mattick J.S."/>
            <person name="Hume D.A."/>
            <person name="Kai C."/>
            <person name="Sasaki D."/>
            <person name="Tomaru Y."/>
            <person name="Fukuda S."/>
            <person name="Kanamori-Katayama M."/>
            <person name="Suzuki M."/>
            <person name="Aoki J."/>
            <person name="Arakawa T."/>
            <person name="Iida J."/>
            <person name="Imamura K."/>
            <person name="Itoh M."/>
            <person name="Kato T."/>
            <person name="Kawaji H."/>
            <person name="Kawagashira N."/>
            <person name="Kawashima T."/>
            <person name="Kojima M."/>
            <person name="Kondo S."/>
            <person name="Konno H."/>
            <person name="Nakano K."/>
            <person name="Ninomiya N."/>
            <person name="Nishio T."/>
            <person name="Okada M."/>
            <person name="Plessy C."/>
            <person name="Shibata K."/>
            <person name="Shiraki T."/>
            <person name="Suzuki S."/>
            <person name="Tagami M."/>
            <person name="Waki K."/>
            <person name="Watahiki A."/>
            <person name="Okamura-Oho Y."/>
            <person name="Suzuki H."/>
            <person name="Kawai J."/>
            <person name="Hayashizaki Y."/>
        </authorList>
    </citation>
    <scope>NUCLEOTIDE SEQUENCE [LARGE SCALE MRNA]</scope>
    <source>
        <strain>C57BL/6J</strain>
        <tissue>Embryo</tissue>
        <tissue>Embryonic stem cell</tissue>
        <tissue>Kidney</tissue>
    </source>
</reference>
<reference key="3">
    <citation type="journal article" date="2004" name="Genome Res.">
        <title>The status, quality, and expansion of the NIH full-length cDNA project: the Mammalian Gene Collection (MGC).</title>
        <authorList>
            <consortium name="The MGC Project Team"/>
        </authorList>
    </citation>
    <scope>NUCLEOTIDE SEQUENCE [LARGE SCALE MRNA]</scope>
    <source>
        <strain>FVB/N-3</strain>
        <tissue>Mammary gland</tissue>
    </source>
</reference>
<reference key="4">
    <citation type="journal article" date="2010" name="Cell">
        <title>A tissue-specific atlas of mouse protein phosphorylation and expression.</title>
        <authorList>
            <person name="Huttlin E.L."/>
            <person name="Jedrychowski M.P."/>
            <person name="Elias J.E."/>
            <person name="Goswami T."/>
            <person name="Rad R."/>
            <person name="Beausoleil S.A."/>
            <person name="Villen J."/>
            <person name="Haas W."/>
            <person name="Sowa M.E."/>
            <person name="Gygi S.P."/>
        </authorList>
    </citation>
    <scope>IDENTIFICATION BY MASS SPECTROMETRY [LARGE SCALE ANALYSIS]</scope>
    <source>
        <tissue>Brain</tissue>
        <tissue>Brown adipose tissue</tissue>
        <tissue>Heart</tissue>
        <tissue>Kidney</tissue>
        <tissue>Liver</tissue>
        <tissue>Lung</tissue>
        <tissue>Pancreas</tissue>
        <tissue>Spleen</tissue>
        <tissue>Testis</tissue>
    </source>
</reference>
<reference evidence="4 5" key="5">
    <citation type="journal article" date="2022" name="Nature">
        <title>A male germ-cell-specific ribosome controls male fertility.</title>
        <authorList>
            <person name="Li H."/>
            <person name="Huo Y."/>
            <person name="He X."/>
            <person name="Yao L."/>
            <person name="Zhang H."/>
            <person name="Cui Y."/>
            <person name="Xiao H."/>
            <person name="Xie W."/>
            <person name="Zhang D."/>
            <person name="Wang Y."/>
            <person name="Zhang S."/>
            <person name="Tu H."/>
            <person name="Cheng Y."/>
            <person name="Guo Y."/>
            <person name="Cao X."/>
            <person name="Zhu Y."/>
            <person name="Jiang T."/>
            <person name="Guo X."/>
            <person name="Qin Y."/>
            <person name="Sha J."/>
        </authorList>
    </citation>
    <scope>STRUCTURE BY ELECTRON MICROSCOPY (3.03 ANGSTROMS) OF RIBOSOME</scope>
    <scope>FUNCTION</scope>
    <scope>SUBUNIT</scope>
    <scope>SUBCELLULAR LOCATION</scope>
</reference>
<dbReference type="EMBL" id="AB037665">
    <property type="protein sequence ID" value="BAB03500.1"/>
    <property type="molecule type" value="mRNA"/>
</dbReference>
<dbReference type="EMBL" id="AK002659">
    <property type="protein sequence ID" value="BAB22266.1"/>
    <property type="molecule type" value="mRNA"/>
</dbReference>
<dbReference type="EMBL" id="AK010277">
    <property type="protein sequence ID" value="BAB26814.1"/>
    <property type="molecule type" value="mRNA"/>
</dbReference>
<dbReference type="EMBL" id="AK010518">
    <property type="protein sequence ID" value="BAB27000.1"/>
    <property type="molecule type" value="mRNA"/>
</dbReference>
<dbReference type="EMBL" id="AK012391">
    <property type="protein sequence ID" value="BAB28208.1"/>
    <property type="molecule type" value="mRNA"/>
</dbReference>
<dbReference type="EMBL" id="BC055346">
    <property type="protein sequence ID" value="AAH55346.1"/>
    <property type="molecule type" value="mRNA"/>
</dbReference>
<dbReference type="CCDS" id="CCDS36365.1"/>
<dbReference type="RefSeq" id="NP_001041522.1">
    <property type="nucleotide sequence ID" value="NM_001048057.2"/>
</dbReference>
<dbReference type="RefSeq" id="NP_001041523.1">
    <property type="nucleotide sequence ID" value="NM_001048058.2"/>
</dbReference>
<dbReference type="RefSeq" id="NP_001349847.1">
    <property type="nucleotide sequence ID" value="NM_001362918.1"/>
</dbReference>
<dbReference type="RefSeq" id="NP_075861.1">
    <property type="nucleotide sequence ID" value="NM_023372.3"/>
</dbReference>
<dbReference type="RefSeq" id="XP_006534072.1">
    <property type="nucleotide sequence ID" value="XM_006534009.2"/>
</dbReference>
<dbReference type="RefSeq" id="XP_017170209.1">
    <property type="nucleotide sequence ID" value="XM_017314720.1"/>
</dbReference>
<dbReference type="PDB" id="6SWA">
    <property type="method" value="EM"/>
    <property type="resolution" value="3.10 A"/>
    <property type="chains" value="i=1-70"/>
</dbReference>
<dbReference type="PDB" id="7CPU">
    <property type="method" value="EM"/>
    <property type="resolution" value="2.82 A"/>
    <property type="chains" value="Lk=1-70"/>
</dbReference>
<dbReference type="PDB" id="7CPV">
    <property type="method" value="EM"/>
    <property type="resolution" value="3.03 A"/>
    <property type="chains" value="Lk=1-70"/>
</dbReference>
<dbReference type="PDB" id="7LS1">
    <property type="method" value="EM"/>
    <property type="resolution" value="3.30 A"/>
    <property type="chains" value="e2=1-70"/>
</dbReference>
<dbReference type="PDB" id="7LS2">
    <property type="method" value="EM"/>
    <property type="resolution" value="3.10 A"/>
    <property type="chains" value="e2=1-70"/>
</dbReference>
<dbReference type="PDBsum" id="6SWA"/>
<dbReference type="PDBsum" id="7CPU"/>
<dbReference type="PDBsum" id="7CPV"/>
<dbReference type="PDBsum" id="7LS1"/>
<dbReference type="PDBsum" id="7LS2"/>
<dbReference type="EMDB" id="EMD-10321"/>
<dbReference type="EMDB" id="EMD-23500"/>
<dbReference type="EMDB" id="EMD-23501"/>
<dbReference type="EMDB" id="EMD-30432"/>
<dbReference type="EMDB" id="EMD-30433"/>
<dbReference type="SMR" id="Q9JJI8"/>
<dbReference type="BioGRID" id="212354">
    <property type="interactions" value="74"/>
</dbReference>
<dbReference type="ComplexPortal" id="CPX-5262">
    <property type="entry name" value="60S cytosolic large ribosomal subunit"/>
</dbReference>
<dbReference type="ComplexPortal" id="CPX-7662">
    <property type="entry name" value="60S cytosolic large ribosomal subunit, testis-specific variant"/>
</dbReference>
<dbReference type="ComplexPortal" id="CPX-7663">
    <property type="entry name" value="60S cytosolic large ribosomal subunit, striated muscle variant"/>
</dbReference>
<dbReference type="FunCoup" id="Q9JJI8">
    <property type="interactions" value="1550"/>
</dbReference>
<dbReference type="IntAct" id="Q9JJI8">
    <property type="interactions" value="5"/>
</dbReference>
<dbReference type="MINT" id="Q9JJI8"/>
<dbReference type="STRING" id="10090.ENSMUSP00000102209"/>
<dbReference type="GlyGen" id="Q9JJI8">
    <property type="glycosylation" value="1 site, 1 O-linked glycan (1 site)"/>
</dbReference>
<dbReference type="iPTMnet" id="Q9JJI8"/>
<dbReference type="PhosphoSitePlus" id="Q9JJI8"/>
<dbReference type="SwissPalm" id="Q9JJI8"/>
<dbReference type="jPOST" id="Q9JJI8"/>
<dbReference type="PaxDb" id="10090-ENSMUSP00000102213"/>
<dbReference type="ProteomicsDB" id="253311"/>
<dbReference type="Pumba" id="Q9JJI8"/>
<dbReference type="TopDownProteomics" id="Q9JJI8"/>
<dbReference type="Antibodypedia" id="45939">
    <property type="antibodies" value="110 antibodies from 20 providers"/>
</dbReference>
<dbReference type="DNASU" id="67671"/>
<dbReference type="Ensembl" id="ENSMUST00000077915.10">
    <property type="protein sequence ID" value="ENSMUSP00000102211.2"/>
    <property type="gene ID" value="ENSMUSG00000057322.13"/>
</dbReference>
<dbReference type="Ensembl" id="ENSMUST00000082092.5">
    <property type="protein sequence ID" value="ENSMUSP00000080741.5"/>
    <property type="gene ID" value="ENSMUSG00000057322.13"/>
</dbReference>
<dbReference type="Ensembl" id="ENSMUST00000106599.8">
    <property type="protein sequence ID" value="ENSMUSP00000102209.2"/>
    <property type="gene ID" value="ENSMUSG00000057322.13"/>
</dbReference>
<dbReference type="Ensembl" id="ENSMUST00000106602.10">
    <property type="protein sequence ID" value="ENSMUSP00000102213.4"/>
    <property type="gene ID" value="ENSMUSG00000057322.13"/>
</dbReference>
<dbReference type="GeneID" id="67671"/>
<dbReference type="KEGG" id="mmu:67671"/>
<dbReference type="UCSC" id="uc007mfk.1">
    <property type="organism name" value="mouse"/>
</dbReference>
<dbReference type="AGR" id="MGI:1914921"/>
<dbReference type="CTD" id="6169"/>
<dbReference type="MGI" id="MGI:1914921">
    <property type="gene designation" value="Rpl38"/>
</dbReference>
<dbReference type="VEuPathDB" id="HostDB:ENSMUSG00000057322"/>
<dbReference type="eggNOG" id="KOG3499">
    <property type="taxonomic scope" value="Eukaryota"/>
</dbReference>
<dbReference type="GeneTree" id="ENSGT00390000003718"/>
<dbReference type="HOGENOM" id="CLU_152057_2_0_1"/>
<dbReference type="InParanoid" id="Q9JJI8"/>
<dbReference type="OMA" id="RCHRFIY"/>
<dbReference type="OrthoDB" id="10250488at2759"/>
<dbReference type="PhylomeDB" id="Q9JJI8"/>
<dbReference type="TreeFam" id="TF300215"/>
<dbReference type="Reactome" id="R-MMU-156827">
    <property type="pathway name" value="L13a-mediated translational silencing of Ceruloplasmin expression"/>
</dbReference>
<dbReference type="Reactome" id="R-MMU-1799339">
    <property type="pathway name" value="SRP-dependent cotranslational protein targeting to membrane"/>
</dbReference>
<dbReference type="Reactome" id="R-MMU-6791226">
    <property type="pathway name" value="Major pathway of rRNA processing in the nucleolus and cytosol"/>
</dbReference>
<dbReference type="Reactome" id="R-MMU-72689">
    <property type="pathway name" value="Formation of a pool of free 40S subunits"/>
</dbReference>
<dbReference type="Reactome" id="R-MMU-72706">
    <property type="pathway name" value="GTP hydrolysis and joining of the 60S ribosomal subunit"/>
</dbReference>
<dbReference type="Reactome" id="R-MMU-975956">
    <property type="pathway name" value="Nonsense Mediated Decay (NMD) independent of the Exon Junction Complex (EJC)"/>
</dbReference>
<dbReference type="Reactome" id="R-MMU-975957">
    <property type="pathway name" value="Nonsense Mediated Decay (NMD) enhanced by the Exon Junction Complex (EJC)"/>
</dbReference>
<dbReference type="BioGRID-ORCS" id="67671">
    <property type="hits" value="29 hits in 71 CRISPR screens"/>
</dbReference>
<dbReference type="CD-CODE" id="CE726F99">
    <property type="entry name" value="Postsynaptic density"/>
</dbReference>
<dbReference type="ChiTaRS" id="Rpl38">
    <property type="organism name" value="mouse"/>
</dbReference>
<dbReference type="PRO" id="PR:Q9JJI8"/>
<dbReference type="Proteomes" id="UP000000589">
    <property type="component" value="Chromosome 11"/>
</dbReference>
<dbReference type="RNAct" id="Q9JJI8">
    <property type="molecule type" value="protein"/>
</dbReference>
<dbReference type="Bgee" id="ENSMUSG00000057322">
    <property type="expression patterns" value="Expressed in yolk sac and 67 other cell types or tissues"/>
</dbReference>
<dbReference type="ExpressionAtlas" id="Q9JJI8">
    <property type="expression patterns" value="baseline and differential"/>
</dbReference>
<dbReference type="GO" id="GO:0005737">
    <property type="term" value="C:cytoplasm"/>
    <property type="evidence" value="ECO:0000314"/>
    <property type="project" value="ComplexPortal"/>
</dbReference>
<dbReference type="GO" id="GO:0005829">
    <property type="term" value="C:cytosol"/>
    <property type="evidence" value="ECO:0000304"/>
    <property type="project" value="Reactome"/>
</dbReference>
<dbReference type="GO" id="GO:0022625">
    <property type="term" value="C:cytosolic large ribosomal subunit"/>
    <property type="evidence" value="ECO:0000314"/>
    <property type="project" value="UniProtKB"/>
</dbReference>
<dbReference type="GO" id="GO:0033291">
    <property type="term" value="C:eukaryotic 80S initiation complex"/>
    <property type="evidence" value="ECO:0000314"/>
    <property type="project" value="MGI"/>
</dbReference>
<dbReference type="GO" id="GO:0098794">
    <property type="term" value="C:postsynapse"/>
    <property type="evidence" value="ECO:0000303"/>
    <property type="project" value="SynGO"/>
</dbReference>
<dbReference type="GO" id="GO:0014069">
    <property type="term" value="C:postsynaptic density"/>
    <property type="evidence" value="ECO:0007669"/>
    <property type="project" value="Ensembl"/>
</dbReference>
<dbReference type="GO" id="GO:0098793">
    <property type="term" value="C:presynapse"/>
    <property type="evidence" value="ECO:0000303"/>
    <property type="project" value="SynGO"/>
</dbReference>
<dbReference type="GO" id="GO:0005840">
    <property type="term" value="C:ribosome"/>
    <property type="evidence" value="ECO:0000303"/>
    <property type="project" value="SynGO"/>
</dbReference>
<dbReference type="GO" id="GO:0045202">
    <property type="term" value="C:synapse"/>
    <property type="evidence" value="ECO:0000314"/>
    <property type="project" value="SynGO"/>
</dbReference>
<dbReference type="GO" id="GO:0003735">
    <property type="term" value="F:structural constituent of ribosome"/>
    <property type="evidence" value="ECO:0000314"/>
    <property type="project" value="UniProtKB"/>
</dbReference>
<dbReference type="GO" id="GO:0034463">
    <property type="term" value="P:90S preribosome assembly"/>
    <property type="evidence" value="ECO:0000314"/>
    <property type="project" value="MGI"/>
</dbReference>
<dbReference type="GO" id="GO:0048318">
    <property type="term" value="P:axial mesoderm development"/>
    <property type="evidence" value="ECO:0000315"/>
    <property type="project" value="MGI"/>
</dbReference>
<dbReference type="GO" id="GO:0002181">
    <property type="term" value="P:cytoplasmic translation"/>
    <property type="evidence" value="ECO:0000303"/>
    <property type="project" value="ComplexPortal"/>
</dbReference>
<dbReference type="GO" id="GO:0042474">
    <property type="term" value="P:middle ear morphogenesis"/>
    <property type="evidence" value="ECO:0000315"/>
    <property type="project" value="MGI"/>
</dbReference>
<dbReference type="GO" id="GO:0001503">
    <property type="term" value="P:ossification"/>
    <property type="evidence" value="ECO:0000315"/>
    <property type="project" value="MGI"/>
</dbReference>
<dbReference type="GO" id="GO:0006417">
    <property type="term" value="P:regulation of translation"/>
    <property type="evidence" value="ECO:0000315"/>
    <property type="project" value="MGI"/>
</dbReference>
<dbReference type="GO" id="GO:0007605">
    <property type="term" value="P:sensory perception of sound"/>
    <property type="evidence" value="ECO:0000315"/>
    <property type="project" value="MGI"/>
</dbReference>
<dbReference type="GO" id="GO:0001501">
    <property type="term" value="P:skeletal system development"/>
    <property type="evidence" value="ECO:0000315"/>
    <property type="project" value="MGI"/>
</dbReference>
<dbReference type="GO" id="GO:0140242">
    <property type="term" value="P:translation at postsynapse"/>
    <property type="evidence" value="ECO:0000303"/>
    <property type="project" value="SynGO"/>
</dbReference>
<dbReference type="GO" id="GO:0140236">
    <property type="term" value="P:translation at presynapse"/>
    <property type="evidence" value="ECO:0000303"/>
    <property type="project" value="SynGO"/>
</dbReference>
<dbReference type="FunFam" id="3.30.720.90:FF:000001">
    <property type="entry name" value="60S ribosomal protein L38"/>
    <property type="match status" value="1"/>
</dbReference>
<dbReference type="Gene3D" id="3.30.720.90">
    <property type="match status" value="1"/>
</dbReference>
<dbReference type="InterPro" id="IPR002675">
    <property type="entry name" value="Ribosomal_eL38"/>
</dbReference>
<dbReference type="InterPro" id="IPR038464">
    <property type="entry name" value="Ribosomal_eL38_sf"/>
</dbReference>
<dbReference type="PANTHER" id="PTHR10965">
    <property type="entry name" value="60S RIBOSOMAL PROTEIN L38"/>
    <property type="match status" value="1"/>
</dbReference>
<dbReference type="PANTHER" id="PTHR10965:SF0">
    <property type="entry name" value="LARGE RIBOSOMAL SUBUNIT PROTEIN EL38"/>
    <property type="match status" value="1"/>
</dbReference>
<dbReference type="Pfam" id="PF01781">
    <property type="entry name" value="Ribosomal_L38e"/>
    <property type="match status" value="1"/>
</dbReference>
<accession>Q9JJI8</accession>
<evidence type="ECO:0000250" key="1">
    <source>
        <dbReference type="UniProtKB" id="P63173"/>
    </source>
</evidence>
<evidence type="ECO:0000269" key="2">
    <source>
    </source>
</evidence>
<evidence type="ECO:0000305" key="3"/>
<evidence type="ECO:0007744" key="4">
    <source>
        <dbReference type="PDB" id="7CPU"/>
    </source>
</evidence>
<evidence type="ECO:0007744" key="5">
    <source>
        <dbReference type="PDB" id="7CPV"/>
    </source>
</evidence>
<proteinExistence type="evidence at protein level"/>
<protein>
    <recommendedName>
        <fullName evidence="3">Large ribosomal subunit protein eL38</fullName>
    </recommendedName>
    <alternativeName>
        <fullName>60S ribosomal protein L38</fullName>
    </alternativeName>
</protein>
<name>RL38_MOUSE</name>
<sequence>MPRKIEEIKDFLLTARRKDAKSVKIKKNKDNVKFKVRCSRYLYTLVITDKEKAEKLKQSLPPGLAVKDLK</sequence>
<feature type="chain" id="PRO_0000215436" description="Large ribosomal subunit protein eL38">
    <location>
        <begin position="1"/>
        <end position="70"/>
    </location>
</feature>
<feature type="modified residue" description="N6-acetyllysine; alternate" evidence="1">
    <location>
        <position position="9"/>
    </location>
</feature>
<feature type="modified residue" description="N6-acetyllysine" evidence="1">
    <location>
        <position position="67"/>
    </location>
</feature>
<feature type="cross-link" description="Glycyl lysine isopeptide (Lys-Gly) (interchain with G-Cter in SUMO2)" evidence="1">
    <location>
        <position position="4"/>
    </location>
</feature>
<feature type="cross-link" description="Glycyl lysine isopeptide (Lys-Gly) (interchain with G-Cter in SUMO2); alternate" evidence="1">
    <location>
        <position position="9"/>
    </location>
</feature>
<keyword id="KW-0002">3D-structure</keyword>
<keyword id="KW-0007">Acetylation</keyword>
<keyword id="KW-0963">Cytoplasm</keyword>
<keyword id="KW-1017">Isopeptide bond</keyword>
<keyword id="KW-1185">Reference proteome</keyword>
<keyword id="KW-0687">Ribonucleoprotein</keyword>
<keyword id="KW-0689">Ribosomal protein</keyword>
<keyword id="KW-0832">Ubl conjugation</keyword>
<organism>
    <name type="scientific">Mus musculus</name>
    <name type="common">Mouse</name>
    <dbReference type="NCBI Taxonomy" id="10090"/>
    <lineage>
        <taxon>Eukaryota</taxon>
        <taxon>Metazoa</taxon>
        <taxon>Chordata</taxon>
        <taxon>Craniata</taxon>
        <taxon>Vertebrata</taxon>
        <taxon>Euteleostomi</taxon>
        <taxon>Mammalia</taxon>
        <taxon>Eutheria</taxon>
        <taxon>Euarchontoglires</taxon>
        <taxon>Glires</taxon>
        <taxon>Rodentia</taxon>
        <taxon>Myomorpha</taxon>
        <taxon>Muroidea</taxon>
        <taxon>Muridae</taxon>
        <taxon>Murinae</taxon>
        <taxon>Mus</taxon>
        <taxon>Mus</taxon>
    </lineage>
</organism>